<organism>
    <name type="scientific">Pseudomonas fluorescens (strain ATCC BAA-477 / NRRL B-23932 / Pf-5)</name>
    <dbReference type="NCBI Taxonomy" id="220664"/>
    <lineage>
        <taxon>Bacteria</taxon>
        <taxon>Pseudomonadati</taxon>
        <taxon>Pseudomonadota</taxon>
        <taxon>Gammaproteobacteria</taxon>
        <taxon>Pseudomonadales</taxon>
        <taxon>Pseudomonadaceae</taxon>
        <taxon>Pseudomonas</taxon>
    </lineage>
</organism>
<evidence type="ECO:0000255" key="1">
    <source>
        <dbReference type="HAMAP-Rule" id="MF_00052"/>
    </source>
</evidence>
<evidence type="ECO:0000255" key="2">
    <source>
        <dbReference type="PROSITE-ProRule" id="PRU01319"/>
    </source>
</evidence>
<accession>Q4KHG2</accession>
<protein>
    <recommendedName>
        <fullName evidence="1">Ribonuclease HII</fullName>
        <shortName evidence="1">RNase HII</shortName>
        <ecNumber evidence="1">3.1.26.4</ecNumber>
    </recommendedName>
</protein>
<name>RNH2_PSEF5</name>
<feature type="chain" id="PRO_0000235753" description="Ribonuclease HII">
    <location>
        <begin position="1"/>
        <end position="208"/>
    </location>
</feature>
<feature type="domain" description="RNase H type-2" evidence="2">
    <location>
        <begin position="13"/>
        <end position="202"/>
    </location>
</feature>
<feature type="binding site" evidence="1">
    <location>
        <position position="19"/>
    </location>
    <ligand>
        <name>a divalent metal cation</name>
        <dbReference type="ChEBI" id="CHEBI:60240"/>
    </ligand>
</feature>
<feature type="binding site" evidence="1">
    <location>
        <position position="20"/>
    </location>
    <ligand>
        <name>a divalent metal cation</name>
        <dbReference type="ChEBI" id="CHEBI:60240"/>
    </ligand>
</feature>
<feature type="binding site" evidence="1">
    <location>
        <position position="111"/>
    </location>
    <ligand>
        <name>a divalent metal cation</name>
        <dbReference type="ChEBI" id="CHEBI:60240"/>
    </ligand>
</feature>
<sequence>MGLDFTLVADAEDLVAGVDEVGRGPLCGAVVTAAVILDPTRPILGLNDSKKLTEARREKLFDEICEKALSWCIARAEVEEIDELNILHATMLAMQRAVEGLSVTPKLAMIDGNRCPKLAMPAEAVVKGDSKVPAIAAASILAKVSRDREMAAFELIYPGYGIGGHKGYPTPVHLEALARLGPTPIHRRSFAPVRQAYEAREALGEIQS</sequence>
<comment type="function">
    <text evidence="1">Endonuclease that specifically degrades the RNA of RNA-DNA hybrids.</text>
</comment>
<comment type="catalytic activity">
    <reaction evidence="1">
        <text>Endonucleolytic cleavage to 5'-phosphomonoester.</text>
        <dbReference type="EC" id="3.1.26.4"/>
    </reaction>
</comment>
<comment type="cofactor">
    <cofactor evidence="1">
        <name>Mn(2+)</name>
        <dbReference type="ChEBI" id="CHEBI:29035"/>
    </cofactor>
    <cofactor evidence="1">
        <name>Mg(2+)</name>
        <dbReference type="ChEBI" id="CHEBI:18420"/>
    </cofactor>
    <text evidence="1">Manganese or magnesium. Binds 1 divalent metal ion per monomer in the absence of substrate. May bind a second metal ion after substrate binding.</text>
</comment>
<comment type="subcellular location">
    <subcellularLocation>
        <location evidence="1">Cytoplasm</location>
    </subcellularLocation>
</comment>
<comment type="similarity">
    <text evidence="1">Belongs to the RNase HII family.</text>
</comment>
<keyword id="KW-0963">Cytoplasm</keyword>
<keyword id="KW-0255">Endonuclease</keyword>
<keyword id="KW-0378">Hydrolase</keyword>
<keyword id="KW-0464">Manganese</keyword>
<keyword id="KW-0479">Metal-binding</keyword>
<keyword id="KW-0540">Nuclease</keyword>
<proteinExistence type="inferred from homology"/>
<reference key="1">
    <citation type="journal article" date="2005" name="Nat. Biotechnol.">
        <title>Complete genome sequence of the plant commensal Pseudomonas fluorescens Pf-5.</title>
        <authorList>
            <person name="Paulsen I.T."/>
            <person name="Press C.M."/>
            <person name="Ravel J."/>
            <person name="Kobayashi D.Y."/>
            <person name="Myers G.S.A."/>
            <person name="Mavrodi D.V."/>
            <person name="DeBoy R.T."/>
            <person name="Seshadri R."/>
            <person name="Ren Q."/>
            <person name="Madupu R."/>
            <person name="Dodson R.J."/>
            <person name="Durkin A.S."/>
            <person name="Brinkac L.M."/>
            <person name="Daugherty S.C."/>
            <person name="Sullivan S.A."/>
            <person name="Rosovitz M.J."/>
            <person name="Gwinn M.L."/>
            <person name="Zhou L."/>
            <person name="Schneider D.J."/>
            <person name="Cartinhour S.W."/>
            <person name="Nelson W.C."/>
            <person name="Weidman J."/>
            <person name="Watkins K."/>
            <person name="Tran K."/>
            <person name="Khouri H."/>
            <person name="Pierson E.A."/>
            <person name="Pierson L.S. III"/>
            <person name="Thomashow L.S."/>
            <person name="Loper J.E."/>
        </authorList>
    </citation>
    <scope>NUCLEOTIDE SEQUENCE [LARGE SCALE GENOMIC DNA]</scope>
    <source>
        <strain>ATCC BAA-477 / NRRL B-23932 / Pf-5</strain>
    </source>
</reference>
<dbReference type="EC" id="3.1.26.4" evidence="1"/>
<dbReference type="EMBL" id="CP000076">
    <property type="protein sequence ID" value="AAY90477.2"/>
    <property type="molecule type" value="Genomic_DNA"/>
</dbReference>
<dbReference type="SMR" id="Q4KHG2"/>
<dbReference type="STRING" id="220664.PFL_1190"/>
<dbReference type="KEGG" id="pfl:PFL_1190"/>
<dbReference type="PATRIC" id="fig|220664.5.peg.1222"/>
<dbReference type="eggNOG" id="COG0164">
    <property type="taxonomic scope" value="Bacteria"/>
</dbReference>
<dbReference type="HOGENOM" id="CLU_036532_3_2_6"/>
<dbReference type="Proteomes" id="UP000008540">
    <property type="component" value="Chromosome"/>
</dbReference>
<dbReference type="GO" id="GO:0005737">
    <property type="term" value="C:cytoplasm"/>
    <property type="evidence" value="ECO:0007669"/>
    <property type="project" value="UniProtKB-SubCell"/>
</dbReference>
<dbReference type="GO" id="GO:0032299">
    <property type="term" value="C:ribonuclease H2 complex"/>
    <property type="evidence" value="ECO:0007669"/>
    <property type="project" value="TreeGrafter"/>
</dbReference>
<dbReference type="GO" id="GO:0030145">
    <property type="term" value="F:manganese ion binding"/>
    <property type="evidence" value="ECO:0007669"/>
    <property type="project" value="UniProtKB-UniRule"/>
</dbReference>
<dbReference type="GO" id="GO:0003723">
    <property type="term" value="F:RNA binding"/>
    <property type="evidence" value="ECO:0007669"/>
    <property type="project" value="InterPro"/>
</dbReference>
<dbReference type="GO" id="GO:0004523">
    <property type="term" value="F:RNA-DNA hybrid ribonuclease activity"/>
    <property type="evidence" value="ECO:0007669"/>
    <property type="project" value="UniProtKB-UniRule"/>
</dbReference>
<dbReference type="GO" id="GO:0043137">
    <property type="term" value="P:DNA replication, removal of RNA primer"/>
    <property type="evidence" value="ECO:0007669"/>
    <property type="project" value="TreeGrafter"/>
</dbReference>
<dbReference type="GO" id="GO:0006298">
    <property type="term" value="P:mismatch repair"/>
    <property type="evidence" value="ECO:0007669"/>
    <property type="project" value="TreeGrafter"/>
</dbReference>
<dbReference type="CDD" id="cd07182">
    <property type="entry name" value="RNase_HII_bacteria_HII_like"/>
    <property type="match status" value="1"/>
</dbReference>
<dbReference type="FunFam" id="3.30.420.10:FF:000006">
    <property type="entry name" value="Ribonuclease HII"/>
    <property type="match status" value="1"/>
</dbReference>
<dbReference type="Gene3D" id="3.30.420.10">
    <property type="entry name" value="Ribonuclease H-like superfamily/Ribonuclease H"/>
    <property type="match status" value="1"/>
</dbReference>
<dbReference type="HAMAP" id="MF_00052_B">
    <property type="entry name" value="RNase_HII_B"/>
    <property type="match status" value="1"/>
</dbReference>
<dbReference type="InterPro" id="IPR022898">
    <property type="entry name" value="RNase_HII"/>
</dbReference>
<dbReference type="InterPro" id="IPR001352">
    <property type="entry name" value="RNase_HII/HIII"/>
</dbReference>
<dbReference type="InterPro" id="IPR024567">
    <property type="entry name" value="RNase_HII/HIII_dom"/>
</dbReference>
<dbReference type="InterPro" id="IPR012337">
    <property type="entry name" value="RNaseH-like_sf"/>
</dbReference>
<dbReference type="InterPro" id="IPR036397">
    <property type="entry name" value="RNaseH_sf"/>
</dbReference>
<dbReference type="NCBIfam" id="NF000594">
    <property type="entry name" value="PRK00015.1-1"/>
    <property type="match status" value="1"/>
</dbReference>
<dbReference type="NCBIfam" id="NF000595">
    <property type="entry name" value="PRK00015.1-3"/>
    <property type="match status" value="1"/>
</dbReference>
<dbReference type="NCBIfam" id="NF000596">
    <property type="entry name" value="PRK00015.1-4"/>
    <property type="match status" value="1"/>
</dbReference>
<dbReference type="PANTHER" id="PTHR10954">
    <property type="entry name" value="RIBONUCLEASE H2 SUBUNIT A"/>
    <property type="match status" value="1"/>
</dbReference>
<dbReference type="PANTHER" id="PTHR10954:SF18">
    <property type="entry name" value="RIBONUCLEASE HII"/>
    <property type="match status" value="1"/>
</dbReference>
<dbReference type="Pfam" id="PF01351">
    <property type="entry name" value="RNase_HII"/>
    <property type="match status" value="1"/>
</dbReference>
<dbReference type="SUPFAM" id="SSF53098">
    <property type="entry name" value="Ribonuclease H-like"/>
    <property type="match status" value="1"/>
</dbReference>
<dbReference type="PROSITE" id="PS51975">
    <property type="entry name" value="RNASE_H_2"/>
    <property type="match status" value="1"/>
</dbReference>
<gene>
    <name evidence="1" type="primary">rnhB</name>
    <name type="ordered locus">PFL_1190</name>
</gene>